<comment type="function">
    <text evidence="1">Synthesizes alpha-1,4-glucan chains using ADP-glucose.</text>
</comment>
<comment type="catalytic activity">
    <reaction evidence="1">
        <text>[(1-&gt;4)-alpha-D-glucosyl](n) + ADP-alpha-D-glucose = [(1-&gt;4)-alpha-D-glucosyl](n+1) + ADP + H(+)</text>
        <dbReference type="Rhea" id="RHEA:18189"/>
        <dbReference type="Rhea" id="RHEA-COMP:9584"/>
        <dbReference type="Rhea" id="RHEA-COMP:9587"/>
        <dbReference type="ChEBI" id="CHEBI:15378"/>
        <dbReference type="ChEBI" id="CHEBI:15444"/>
        <dbReference type="ChEBI" id="CHEBI:57498"/>
        <dbReference type="ChEBI" id="CHEBI:456216"/>
        <dbReference type="EC" id="2.4.1.21"/>
    </reaction>
</comment>
<comment type="pathway">
    <text evidence="1">Glycan biosynthesis; glycogen biosynthesis.</text>
</comment>
<comment type="similarity">
    <text evidence="1">Belongs to the glycosyltransferase 1 family. Bacterial/plant glycogen synthase subfamily.</text>
</comment>
<feature type="chain" id="PRO_0000241804" description="Glycogen synthase 1">
    <location>
        <begin position="1"/>
        <end position="491"/>
    </location>
</feature>
<feature type="binding site" evidence="1">
    <location>
        <position position="15"/>
    </location>
    <ligand>
        <name>ADP-alpha-D-glucose</name>
        <dbReference type="ChEBI" id="CHEBI:57498"/>
    </ligand>
</feature>
<accession>Q2JSZ9</accession>
<gene>
    <name evidence="1" type="primary">glgA1</name>
    <name type="ordered locus">CYA_2071</name>
</gene>
<organism>
    <name type="scientific">Synechococcus sp. (strain JA-3-3Ab)</name>
    <name type="common">Cyanobacteria bacterium Yellowstone A-Prime</name>
    <dbReference type="NCBI Taxonomy" id="321327"/>
    <lineage>
        <taxon>Bacteria</taxon>
        <taxon>Bacillati</taxon>
        <taxon>Cyanobacteriota</taxon>
        <taxon>Cyanophyceae</taxon>
        <taxon>Synechococcales</taxon>
        <taxon>Synechococcaceae</taxon>
        <taxon>Synechococcus</taxon>
    </lineage>
</organism>
<keyword id="KW-0320">Glycogen biosynthesis</keyword>
<keyword id="KW-0328">Glycosyltransferase</keyword>
<keyword id="KW-0808">Transferase</keyword>
<reference key="1">
    <citation type="journal article" date="2007" name="ISME J.">
        <title>Population level functional diversity in a microbial community revealed by comparative genomic and metagenomic analyses.</title>
        <authorList>
            <person name="Bhaya D."/>
            <person name="Grossman A.R."/>
            <person name="Steunou A.-S."/>
            <person name="Khuri N."/>
            <person name="Cohan F.M."/>
            <person name="Hamamura N."/>
            <person name="Melendrez M.C."/>
            <person name="Bateson M.M."/>
            <person name="Ward D.M."/>
            <person name="Heidelberg J.F."/>
        </authorList>
    </citation>
    <scope>NUCLEOTIDE SEQUENCE [LARGE SCALE GENOMIC DNA]</scope>
    <source>
        <strain>JA-3-3Ab</strain>
    </source>
</reference>
<evidence type="ECO:0000255" key="1">
    <source>
        <dbReference type="HAMAP-Rule" id="MF_00484"/>
    </source>
</evidence>
<proteinExistence type="inferred from homology"/>
<dbReference type="EC" id="2.4.1.21" evidence="1"/>
<dbReference type="EMBL" id="CP000239">
    <property type="protein sequence ID" value="ABD00211.1"/>
    <property type="molecule type" value="Genomic_DNA"/>
</dbReference>
<dbReference type="SMR" id="Q2JSZ9"/>
<dbReference type="STRING" id="321327.CYA_2071"/>
<dbReference type="CAZy" id="GT5">
    <property type="family name" value="Glycosyltransferase Family 5"/>
</dbReference>
<dbReference type="KEGG" id="cya:CYA_2071"/>
<dbReference type="eggNOG" id="COG0297">
    <property type="taxonomic scope" value="Bacteria"/>
</dbReference>
<dbReference type="HOGENOM" id="CLU_009583_18_3_3"/>
<dbReference type="OrthoDB" id="9808590at2"/>
<dbReference type="UniPathway" id="UPA00164"/>
<dbReference type="Proteomes" id="UP000008818">
    <property type="component" value="Chromosome"/>
</dbReference>
<dbReference type="GO" id="GO:0009011">
    <property type="term" value="F:alpha-1,4-glucan glucosyltransferase (ADP-glucose donor) activity"/>
    <property type="evidence" value="ECO:0007669"/>
    <property type="project" value="UniProtKB-UniRule"/>
</dbReference>
<dbReference type="GO" id="GO:0004373">
    <property type="term" value="F:alpha-1,4-glucan glucosyltransferase (UDP-glucose donor) activity"/>
    <property type="evidence" value="ECO:0007669"/>
    <property type="project" value="InterPro"/>
</dbReference>
<dbReference type="GO" id="GO:0005978">
    <property type="term" value="P:glycogen biosynthetic process"/>
    <property type="evidence" value="ECO:0007669"/>
    <property type="project" value="UniProtKB-UniRule"/>
</dbReference>
<dbReference type="CDD" id="cd03791">
    <property type="entry name" value="GT5_Glycogen_synthase_DULL1-like"/>
    <property type="match status" value="1"/>
</dbReference>
<dbReference type="Gene3D" id="3.40.50.2000">
    <property type="entry name" value="Glycogen Phosphorylase B"/>
    <property type="match status" value="2"/>
</dbReference>
<dbReference type="HAMAP" id="MF_00484">
    <property type="entry name" value="Glycogen_synth"/>
    <property type="match status" value="1"/>
</dbReference>
<dbReference type="InterPro" id="IPR001296">
    <property type="entry name" value="Glyco_trans_1"/>
</dbReference>
<dbReference type="InterPro" id="IPR011835">
    <property type="entry name" value="GS/SS"/>
</dbReference>
<dbReference type="InterPro" id="IPR013534">
    <property type="entry name" value="Starch_synth_cat_dom"/>
</dbReference>
<dbReference type="NCBIfam" id="TIGR02095">
    <property type="entry name" value="glgA"/>
    <property type="match status" value="1"/>
</dbReference>
<dbReference type="NCBIfam" id="NF001902">
    <property type="entry name" value="PRK00654.2-1"/>
    <property type="match status" value="1"/>
</dbReference>
<dbReference type="NCBIfam" id="NF001905">
    <property type="entry name" value="PRK00654.2-4"/>
    <property type="match status" value="1"/>
</dbReference>
<dbReference type="PANTHER" id="PTHR46083">
    <property type="match status" value="1"/>
</dbReference>
<dbReference type="PANTHER" id="PTHR46083:SF1">
    <property type="entry name" value="GLYCOGEN SYNTHASE 2-RELATED"/>
    <property type="match status" value="1"/>
</dbReference>
<dbReference type="Pfam" id="PF08323">
    <property type="entry name" value="Glyco_transf_5"/>
    <property type="match status" value="1"/>
</dbReference>
<dbReference type="Pfam" id="PF00534">
    <property type="entry name" value="Glycos_transf_1"/>
    <property type="match status" value="1"/>
</dbReference>
<dbReference type="SUPFAM" id="SSF53756">
    <property type="entry name" value="UDP-Glycosyltransferase/glycogen phosphorylase"/>
    <property type="match status" value="1"/>
</dbReference>
<sequence>MYIVQIASECAPVIKAGGLGDVVYGLSRELEVRGHCVELVLPKYDTMRYDQIWGLHDAYRDLWVPWYGGAIHCSVYCGWVHGRLCFFIEPHSGDNFFNRGCYYGCPDDNMRFAFFSKAALEFLLKSNKRPDIIHCHDWQTGLVPVLLFEIYKYHGMENQRVCYTIHNFKHQGFGGPEILWATGLNREPYYFHYDRLRDNFNPFALNFMKGGIVFSNFVTTVSPTHALEARFGNYNYGLGHTLYLHQHKFRGVLNGIDYDIWNPEIDRFIPFHYTAQTLENKAKNKKALRDQLWLQDVDKPIVAYIGRLDEQKGVHLVHHAIYRSLFKNAQFVLLGSATEPGIGAWFAHEKRYLNDNPDVHIELGFNEELSHLIYAGADILVVPSHYEPCGLTQMIGLKYGTVPVVRGVGGLVDTVFDRDYDTRKLPEQRNGYVFYHTDRAALESALDRAIDLWYTAPDQFRQLQVQGMSYDYSWNYPGKEYLEIYEFIRHR</sequence>
<name>GLGA1_SYNJA</name>
<protein>
    <recommendedName>
        <fullName evidence="1">Glycogen synthase 1</fullName>
        <ecNumber evidence="1">2.4.1.21</ecNumber>
    </recommendedName>
    <alternativeName>
        <fullName evidence="1">Starch [bacterial glycogen] synthase 1</fullName>
    </alternativeName>
</protein>